<feature type="chain" id="PRO_0000088342" description="Magnesium and cobalt efflux protein CorC">
    <location>
        <begin position="1"/>
        <end position="291"/>
    </location>
</feature>
<feature type="domain" description="CBS 1" evidence="2">
    <location>
        <begin position="72"/>
        <end position="131"/>
    </location>
</feature>
<feature type="domain" description="CBS 2" evidence="2">
    <location>
        <begin position="137"/>
        <end position="194"/>
    </location>
</feature>
<accession>P57518</accession>
<proteinExistence type="inferred from homology"/>
<comment type="function">
    <text evidence="1">Plays a role in the transport of magnesium and cobalt ions.</text>
</comment>
<comment type="similarity">
    <text evidence="3">Belongs to the UPF0053 family.</text>
</comment>
<keyword id="KW-0129">CBS domain</keyword>
<keyword id="KW-0170">Cobalt</keyword>
<keyword id="KW-0460">Magnesium</keyword>
<keyword id="KW-1185">Reference proteome</keyword>
<keyword id="KW-0677">Repeat</keyword>
<keyword id="KW-0813">Transport</keyword>
<reference key="1">
    <citation type="journal article" date="2000" name="Nature">
        <title>Genome sequence of the endocellular bacterial symbiont of aphids Buchnera sp. APS.</title>
        <authorList>
            <person name="Shigenobu S."/>
            <person name="Watanabe H."/>
            <person name="Hattori M."/>
            <person name="Sakaki Y."/>
            <person name="Ishikawa H."/>
        </authorList>
    </citation>
    <scope>NUCLEOTIDE SEQUENCE [LARGE SCALE GENOMIC DNA]</scope>
    <source>
        <strain>APS</strain>
    </source>
</reference>
<organism>
    <name type="scientific">Buchnera aphidicola subsp. Acyrthosiphon pisum (strain APS)</name>
    <name type="common">Acyrthosiphon pisum symbiotic bacterium</name>
    <dbReference type="NCBI Taxonomy" id="107806"/>
    <lineage>
        <taxon>Bacteria</taxon>
        <taxon>Pseudomonadati</taxon>
        <taxon>Pseudomonadota</taxon>
        <taxon>Gammaproteobacteria</taxon>
        <taxon>Enterobacterales</taxon>
        <taxon>Erwiniaceae</taxon>
        <taxon>Buchnera</taxon>
    </lineage>
</organism>
<evidence type="ECO:0000250" key="1"/>
<evidence type="ECO:0000255" key="2">
    <source>
        <dbReference type="PROSITE-ProRule" id="PRU00703"/>
    </source>
</evidence>
<evidence type="ECO:0000305" key="3"/>
<gene>
    <name type="primary">corC</name>
    <name type="ordered locus">BU443</name>
</gene>
<protein>
    <recommendedName>
        <fullName>Magnesium and cobalt efflux protein CorC</fullName>
    </recommendedName>
</protein>
<sequence>MSDNHLQNSDKINRKGFFSILLNQIFHDEPKNREELLVLIRDSEQNELIDQDTCDMLEGVMHIAKKRIKEIMIPRTQMITLKLHHNLNECLDVIIESAHSRFPVMSNDNNYVEGFLIAKDLLPFMKQSANIFCIKNILRPAVVVPESKHVDRMLKEFRSKRNHMAIVIDEFGAVSGLVTIEDILELIVGEIEDEYDDEETLNIRKIQKSTFSIRALTEIKEFNETFNTNFSDEEVDTIGGLVMKEFGHLPSRGESINIDGYSFKISIADSRKVIQIHVTIPENKTPVLIEA</sequence>
<dbReference type="EMBL" id="BA000003">
    <property type="protein sequence ID" value="BAB13141.1"/>
    <property type="molecule type" value="Genomic_DNA"/>
</dbReference>
<dbReference type="RefSeq" id="NP_240255.1">
    <property type="nucleotide sequence ID" value="NC_002528.1"/>
</dbReference>
<dbReference type="RefSeq" id="WP_009874397.1">
    <property type="nucleotide sequence ID" value="NZ_AP036055.1"/>
</dbReference>
<dbReference type="SMR" id="P57518"/>
<dbReference type="STRING" id="563178.BUAP5A_436"/>
<dbReference type="EnsemblBacteria" id="BAB13141">
    <property type="protein sequence ID" value="BAB13141"/>
    <property type="gene ID" value="BAB13141"/>
</dbReference>
<dbReference type="KEGG" id="buc:BU443"/>
<dbReference type="PATRIC" id="fig|107806.10.peg.453"/>
<dbReference type="eggNOG" id="COG4535">
    <property type="taxonomic scope" value="Bacteria"/>
</dbReference>
<dbReference type="HOGENOM" id="CLU_015237_3_0_6"/>
<dbReference type="Proteomes" id="UP000001806">
    <property type="component" value="Chromosome"/>
</dbReference>
<dbReference type="GO" id="GO:0005886">
    <property type="term" value="C:plasma membrane"/>
    <property type="evidence" value="ECO:0007669"/>
    <property type="project" value="TreeGrafter"/>
</dbReference>
<dbReference type="GO" id="GO:0050660">
    <property type="term" value="F:flavin adenine dinucleotide binding"/>
    <property type="evidence" value="ECO:0007669"/>
    <property type="project" value="InterPro"/>
</dbReference>
<dbReference type="CDD" id="cd04590">
    <property type="entry name" value="CBS_pair_CorC_HlyC_assoc"/>
    <property type="match status" value="1"/>
</dbReference>
<dbReference type="FunFam" id="3.10.580.10:FF:000002">
    <property type="entry name" value="Magnesium/cobalt efflux protein CorC"/>
    <property type="match status" value="1"/>
</dbReference>
<dbReference type="Gene3D" id="3.30.465.10">
    <property type="match status" value="1"/>
</dbReference>
<dbReference type="Gene3D" id="3.10.580.10">
    <property type="entry name" value="CBS-domain"/>
    <property type="match status" value="1"/>
</dbReference>
<dbReference type="InterPro" id="IPR000644">
    <property type="entry name" value="CBS_dom"/>
</dbReference>
<dbReference type="InterPro" id="IPR046342">
    <property type="entry name" value="CBS_dom_sf"/>
</dbReference>
<dbReference type="InterPro" id="IPR054115">
    <property type="entry name" value="CorC_N"/>
</dbReference>
<dbReference type="InterPro" id="IPR036318">
    <property type="entry name" value="FAD-bd_PCMH-like_sf"/>
</dbReference>
<dbReference type="InterPro" id="IPR016169">
    <property type="entry name" value="FAD-bd_PCMH_sub2"/>
</dbReference>
<dbReference type="InterPro" id="IPR044751">
    <property type="entry name" value="Ion_transp-like_CBS"/>
</dbReference>
<dbReference type="InterPro" id="IPR005170">
    <property type="entry name" value="Transptr-assoc_dom"/>
</dbReference>
<dbReference type="NCBIfam" id="NF011675">
    <property type="entry name" value="PRK15094.1"/>
    <property type="match status" value="1"/>
</dbReference>
<dbReference type="PANTHER" id="PTHR22777">
    <property type="entry name" value="HEMOLYSIN-RELATED"/>
    <property type="match status" value="1"/>
</dbReference>
<dbReference type="PANTHER" id="PTHR22777:SF27">
    <property type="entry name" value="MAGNESIUM AND COBALT EFFLUX PROTEIN CORC"/>
    <property type="match status" value="1"/>
</dbReference>
<dbReference type="Pfam" id="PF00571">
    <property type="entry name" value="CBS"/>
    <property type="match status" value="2"/>
</dbReference>
<dbReference type="Pfam" id="PF03471">
    <property type="entry name" value="CorC_HlyC"/>
    <property type="match status" value="1"/>
</dbReference>
<dbReference type="Pfam" id="PF21917">
    <property type="entry name" value="NMB0537_N"/>
    <property type="match status" value="1"/>
</dbReference>
<dbReference type="SMART" id="SM01091">
    <property type="entry name" value="CorC_HlyC"/>
    <property type="match status" value="1"/>
</dbReference>
<dbReference type="SUPFAM" id="SSF54631">
    <property type="entry name" value="CBS-domain pair"/>
    <property type="match status" value="1"/>
</dbReference>
<dbReference type="SUPFAM" id="SSF56176">
    <property type="entry name" value="FAD-binding/transporter-associated domain-like"/>
    <property type="match status" value="1"/>
</dbReference>
<dbReference type="PROSITE" id="PS51371">
    <property type="entry name" value="CBS"/>
    <property type="match status" value="2"/>
</dbReference>
<name>CORC_BUCAI</name>